<accession>O77762</accession>
<accession>A1E293</accession>
<dbReference type="EMBL" id="AF054833">
    <property type="protein sequence ID" value="AAD11563.1"/>
    <property type="molecule type" value="mRNA"/>
</dbReference>
<dbReference type="EMBL" id="AF083270">
    <property type="protein sequence ID" value="AAD09005.1"/>
    <property type="molecule type" value="mRNA"/>
</dbReference>
<dbReference type="EMBL" id="AF104245">
    <property type="protein sequence ID" value="AAC83931.1"/>
    <property type="molecule type" value="mRNA"/>
</dbReference>
<dbReference type="EMBL" id="AF187322">
    <property type="protein sequence ID" value="AAF01043.1"/>
    <property type="molecule type" value="mRNA"/>
</dbReference>
<dbReference type="EMBL" id="AF239917">
    <property type="protein sequence ID" value="AAF60177.1"/>
    <property type="molecule type" value="mRNA"/>
</dbReference>
<dbReference type="EMBL" id="EF095771">
    <property type="protein sequence ID" value="ABL01502.1"/>
    <property type="molecule type" value="mRNA"/>
</dbReference>
<dbReference type="RefSeq" id="NP_001003159.1">
    <property type="nucleotide sequence ID" value="NM_001003159.1"/>
</dbReference>
<dbReference type="SMR" id="O77762"/>
<dbReference type="FunCoup" id="O77762">
    <property type="interactions" value="112"/>
</dbReference>
<dbReference type="STRING" id="9615.ENSCAFP00000001253"/>
<dbReference type="GlyCosmos" id="O77762">
    <property type="glycosylation" value="6 sites, No reported glycans"/>
</dbReference>
<dbReference type="PaxDb" id="9615-ENSCAFP00000001253"/>
<dbReference type="Ensembl" id="ENSCAFT00000001367.5">
    <property type="protein sequence ID" value="ENSCAFP00000001253.3"/>
    <property type="gene ID" value="ENSCAFG00000000880.5"/>
</dbReference>
<dbReference type="Ensembl" id="ENSCAFT00030021538.1">
    <property type="protein sequence ID" value="ENSCAFP00030018780.1"/>
    <property type="gene ID" value="ENSCAFG00030011649.1"/>
</dbReference>
<dbReference type="Ensembl" id="ENSCAFT00040011833.1">
    <property type="protein sequence ID" value="ENSCAFP00040010259.1"/>
    <property type="gene ID" value="ENSCAFG00040006346.1"/>
</dbReference>
<dbReference type="Ensembl" id="ENSCAFT00845019424.1">
    <property type="protein sequence ID" value="ENSCAFP00845015186.1"/>
    <property type="gene ID" value="ENSCAFG00845010991.1"/>
</dbReference>
<dbReference type="GeneID" id="403785"/>
<dbReference type="KEGG" id="cfa:403785"/>
<dbReference type="CTD" id="3565"/>
<dbReference type="VEuPathDB" id="HostDB:ENSCAFG00845010991"/>
<dbReference type="VGNC" id="VGNC:41987">
    <property type="gene designation" value="IL4"/>
</dbReference>
<dbReference type="GeneTree" id="ENSGT00390000013108"/>
<dbReference type="HOGENOM" id="CLU_154691_0_0_1"/>
<dbReference type="InParanoid" id="O77762"/>
<dbReference type="OMA" id="GTPCTEM"/>
<dbReference type="OrthoDB" id="9528087at2759"/>
<dbReference type="Reactome" id="R-CFA-6785807">
    <property type="pathway name" value="Interleukin-4 and Interleukin-13 signaling"/>
</dbReference>
<dbReference type="Proteomes" id="UP000002254">
    <property type="component" value="Chromosome 11"/>
</dbReference>
<dbReference type="Proteomes" id="UP000694429">
    <property type="component" value="Chromosome 11"/>
</dbReference>
<dbReference type="Proteomes" id="UP000694542">
    <property type="component" value="Chromosome 11"/>
</dbReference>
<dbReference type="Proteomes" id="UP000805418">
    <property type="component" value="Chromosome 11"/>
</dbReference>
<dbReference type="Bgee" id="ENSCAFG00000000880">
    <property type="expression patterns" value="Expressed in heart right ventricle and 4 other cell types or tissues"/>
</dbReference>
<dbReference type="GO" id="GO:0005615">
    <property type="term" value="C:extracellular space"/>
    <property type="evidence" value="ECO:0000250"/>
    <property type="project" value="UniProtKB"/>
</dbReference>
<dbReference type="GO" id="GO:0005125">
    <property type="term" value="F:cytokine activity"/>
    <property type="evidence" value="ECO:0007669"/>
    <property type="project" value="UniProtKB-KW"/>
</dbReference>
<dbReference type="GO" id="GO:0008083">
    <property type="term" value="F:growth factor activity"/>
    <property type="evidence" value="ECO:0007669"/>
    <property type="project" value="UniProtKB-KW"/>
</dbReference>
<dbReference type="GO" id="GO:0005136">
    <property type="term" value="F:interleukin-4 receptor binding"/>
    <property type="evidence" value="ECO:0007669"/>
    <property type="project" value="InterPro"/>
</dbReference>
<dbReference type="GO" id="GO:0042113">
    <property type="term" value="P:B cell activation"/>
    <property type="evidence" value="ECO:0007669"/>
    <property type="project" value="UniProtKB-KW"/>
</dbReference>
<dbReference type="GO" id="GO:0006955">
    <property type="term" value="P:immune response"/>
    <property type="evidence" value="ECO:0007669"/>
    <property type="project" value="InterPro"/>
</dbReference>
<dbReference type="GO" id="GO:0035771">
    <property type="term" value="P:interleukin-4-mediated signaling pathway"/>
    <property type="evidence" value="ECO:0000318"/>
    <property type="project" value="GO_Central"/>
</dbReference>
<dbReference type="GO" id="GO:0043066">
    <property type="term" value="P:negative regulation of apoptotic process"/>
    <property type="evidence" value="ECO:0000250"/>
    <property type="project" value="UniProtKB"/>
</dbReference>
<dbReference type="GO" id="GO:0050728">
    <property type="term" value="P:negative regulation of inflammatory response"/>
    <property type="evidence" value="ECO:0000318"/>
    <property type="project" value="GO_Central"/>
</dbReference>
<dbReference type="GO" id="GO:0045671">
    <property type="term" value="P:negative regulation of osteoclast differentiation"/>
    <property type="evidence" value="ECO:0000250"/>
    <property type="project" value="UniProtKB"/>
</dbReference>
<dbReference type="GO" id="GO:0030890">
    <property type="term" value="P:positive regulation of B cell proliferation"/>
    <property type="evidence" value="ECO:0000250"/>
    <property type="project" value="UniProtKB"/>
</dbReference>
<dbReference type="GO" id="GO:0045893">
    <property type="term" value="P:positive regulation of DNA-templated transcription"/>
    <property type="evidence" value="ECO:0000318"/>
    <property type="project" value="GO_Central"/>
</dbReference>
<dbReference type="GO" id="GO:0048295">
    <property type="term" value="P:positive regulation of isotype switching to IgE isotypes"/>
    <property type="evidence" value="ECO:0000250"/>
    <property type="project" value="UniProtKB"/>
</dbReference>
<dbReference type="GO" id="GO:0048304">
    <property type="term" value="P:positive regulation of isotype switching to IgG isotypes"/>
    <property type="evidence" value="ECO:0000250"/>
    <property type="project" value="UniProtKB"/>
</dbReference>
<dbReference type="GO" id="GO:0016239">
    <property type="term" value="P:positive regulation of macroautophagy"/>
    <property type="evidence" value="ECO:0000250"/>
    <property type="project" value="UniProtKB"/>
</dbReference>
<dbReference type="GO" id="GO:0045348">
    <property type="term" value="P:positive regulation of MHC class II biosynthetic process"/>
    <property type="evidence" value="ECO:0000250"/>
    <property type="project" value="UniProtKB"/>
</dbReference>
<dbReference type="GO" id="GO:0042102">
    <property type="term" value="P:positive regulation of T cell proliferation"/>
    <property type="evidence" value="ECO:0000250"/>
    <property type="project" value="UniProtKB"/>
</dbReference>
<dbReference type="GO" id="GO:0045944">
    <property type="term" value="P:positive regulation of transcription by RNA polymerase II"/>
    <property type="evidence" value="ECO:0000250"/>
    <property type="project" value="UniProtKB"/>
</dbReference>
<dbReference type="GO" id="GO:0050776">
    <property type="term" value="P:regulation of immune response"/>
    <property type="evidence" value="ECO:0000250"/>
    <property type="project" value="UniProtKB"/>
</dbReference>
<dbReference type="FunFam" id="1.20.1250.10:FF:000014">
    <property type="entry name" value="Interleukin-4"/>
    <property type="match status" value="1"/>
</dbReference>
<dbReference type="Gene3D" id="1.20.1250.10">
    <property type="match status" value="1"/>
</dbReference>
<dbReference type="InterPro" id="IPR009079">
    <property type="entry name" value="4_helix_cytokine-like_core"/>
</dbReference>
<dbReference type="InterPro" id="IPR002354">
    <property type="entry name" value="IL-4"/>
</dbReference>
<dbReference type="InterPro" id="IPR001325">
    <property type="entry name" value="IL-4/IL-13"/>
</dbReference>
<dbReference type="InterPro" id="IPR018096">
    <property type="entry name" value="IL-4/IL-13_CS"/>
</dbReference>
<dbReference type="PANTHER" id="PTHR47401">
    <property type="entry name" value="INTERLEUKIN-4"/>
    <property type="match status" value="1"/>
</dbReference>
<dbReference type="PANTHER" id="PTHR47401:SF1">
    <property type="entry name" value="INTERLEUKIN-4"/>
    <property type="match status" value="1"/>
</dbReference>
<dbReference type="Pfam" id="PF00727">
    <property type="entry name" value="IL4"/>
    <property type="match status" value="1"/>
</dbReference>
<dbReference type="PIRSF" id="PIRSF001941">
    <property type="entry name" value="Interleukin_4"/>
    <property type="match status" value="1"/>
</dbReference>
<dbReference type="PRINTS" id="PR00431">
    <property type="entry name" value="INTERLEUKIN4"/>
</dbReference>
<dbReference type="SMART" id="SM00190">
    <property type="entry name" value="IL4_13"/>
    <property type="match status" value="1"/>
</dbReference>
<dbReference type="SUPFAM" id="SSF47266">
    <property type="entry name" value="4-helical cytokines"/>
    <property type="match status" value="1"/>
</dbReference>
<dbReference type="PROSITE" id="PS00838">
    <property type="entry name" value="INTERLEUKIN_4_13"/>
    <property type="match status" value="1"/>
</dbReference>
<comment type="function">
    <text evidence="2">Participates in at least several B-cell activation processes as well as of other cell types. It is a costimulator of DNA-synthesis. It induces the expression of class II MHC molecules on resting B-cells. It enhances both secretion and cell surface expression of IgE and IgG1. It also regulates the expression of the low affinity Fc receptor for IgE (CD23) on both lymphocytes and monocytes. Positively regulates IL31RA expression in macrophages. Stimulates autophagy in dendritic cells by interfering with mTORC1 signaling and through the induction of RUFY4.</text>
</comment>
<comment type="subcellular location">
    <subcellularLocation>
        <location>Secreted</location>
    </subcellularLocation>
</comment>
<comment type="similarity">
    <text evidence="4">Belongs to the IL-4/IL-13 family.</text>
</comment>
<keyword id="KW-0075">B-cell activation</keyword>
<keyword id="KW-0202">Cytokine</keyword>
<keyword id="KW-1015">Disulfide bond</keyword>
<keyword id="KW-0325">Glycoprotein</keyword>
<keyword id="KW-0339">Growth factor</keyword>
<keyword id="KW-1185">Reference proteome</keyword>
<keyword id="KW-0964">Secreted</keyword>
<keyword id="KW-0732">Signal</keyword>
<feature type="signal peptide" evidence="1">
    <location>
        <begin position="1"/>
        <end position="24"/>
    </location>
</feature>
<feature type="chain" id="PRO_0000015526" description="Interleukin-4">
    <location>
        <begin position="25"/>
        <end position="132"/>
    </location>
</feature>
<feature type="glycosylation site" description="N-linked (GlcNAc...) asparagine" evidence="3">
    <location>
        <position position="28"/>
    </location>
</feature>
<feature type="glycosylation site" description="N-linked (GlcNAc...) asparagine" evidence="3">
    <location>
        <position position="45"/>
    </location>
</feature>
<feature type="glycosylation site" description="N-linked (GlcNAc...) asparagine" evidence="3">
    <location>
        <position position="62"/>
    </location>
</feature>
<feature type="glycosylation site" description="N-linked (GlcNAc...) asparagine" evidence="3">
    <location>
        <position position="83"/>
    </location>
</feature>
<feature type="glycosylation site" description="N-linked (GlcNAc...) asparagine" evidence="3">
    <location>
        <position position="95"/>
    </location>
</feature>
<feature type="glycosylation site" description="N-linked (GlcNAc...) asparagine" evidence="3">
    <location>
        <position position="101"/>
    </location>
</feature>
<feature type="disulfide bond" evidence="1">
    <location>
        <begin position="48"/>
        <end position="84"/>
    </location>
</feature>
<feature type="disulfide bond" evidence="1">
    <location>
        <begin position="70"/>
        <end position="104"/>
    </location>
</feature>
<proteinExistence type="evidence at transcript level"/>
<sequence length="132" mass="15267">MGLTSQLIPTLVCLLALTSTFVHGHNFNITIKEIIKMLNILTARNDSCMELTVKDVFTAPKNTSDKEIFCRAATVLRQIYTHNCSNRYLRGLYRNLSSMANKTCSMNEIKKSTLKDFLERLKVIMQKKYYRH</sequence>
<organism>
    <name type="scientific">Canis lupus familiaris</name>
    <name type="common">Dog</name>
    <name type="synonym">Canis familiaris</name>
    <dbReference type="NCBI Taxonomy" id="9615"/>
    <lineage>
        <taxon>Eukaryota</taxon>
        <taxon>Metazoa</taxon>
        <taxon>Chordata</taxon>
        <taxon>Craniata</taxon>
        <taxon>Vertebrata</taxon>
        <taxon>Euteleostomi</taxon>
        <taxon>Mammalia</taxon>
        <taxon>Eutheria</taxon>
        <taxon>Laurasiatheria</taxon>
        <taxon>Carnivora</taxon>
        <taxon>Caniformia</taxon>
        <taxon>Canidae</taxon>
        <taxon>Canis</taxon>
    </lineage>
</organism>
<protein>
    <recommendedName>
        <fullName>Interleukin-4</fullName>
        <shortName>IL-4</shortName>
    </recommendedName>
    <alternativeName>
        <fullName>B-cell stimulatory factor 1</fullName>
        <shortName>BSF-1</shortName>
    </alternativeName>
    <alternativeName>
        <fullName>Lymphocyte stimulatory factor 1</fullName>
    </alternativeName>
</protein>
<name>IL4_CANLF</name>
<evidence type="ECO:0000250" key="1"/>
<evidence type="ECO:0000250" key="2">
    <source>
        <dbReference type="UniProtKB" id="P07750"/>
    </source>
</evidence>
<evidence type="ECO:0000255" key="3"/>
<evidence type="ECO:0000305" key="4"/>
<gene>
    <name type="primary">IL4</name>
</gene>
<reference key="1">
    <citation type="journal article" date="1999" name="Immunogenetics">
        <title>Molecular cloning and sequencing of the cDNA for dog interleukin-4.</title>
        <authorList>
            <person name="van der Kaaij S.Y."/>
            <person name="Pinelli E."/>
            <person name="Broeren C.P.M."/>
            <person name="Schetters T.P.M."/>
            <person name="Haghparast A."/>
            <person name="Ruitenberg E.J."/>
            <person name="Rutten V.P.M.G."/>
        </authorList>
    </citation>
    <scope>NUCLEOTIDE SEQUENCE [MRNA]</scope>
    <source>
        <strain>Beagle</strain>
    </source>
</reference>
<reference key="2">
    <citation type="submission" date="1998-08" db="EMBL/GenBank/DDBJ databases">
        <title>Cloning and expression of canine IL4.</title>
        <authorList>
            <person name="Boroughs K.L."/>
            <person name="Dreitz M."/>
            <person name="Sim G.-K."/>
        </authorList>
    </citation>
    <scope>NUCLEOTIDE SEQUENCE [MRNA]</scope>
    <source>
        <strain>Beagle</strain>
    </source>
</reference>
<reference key="3">
    <citation type="submission" date="1998-11" db="EMBL/GenBank/DDBJ databases">
        <title>Nucleotide sequence and deduced amino acid sequence of canine interleukin 4 cDNA.</title>
        <authorList>
            <person name="Kobayashi H."/>
            <person name="Yoshida M."/>
            <person name="Nakagaki K."/>
            <person name="Katae H."/>
            <person name="Nogami S."/>
            <person name="Harasawa R."/>
            <person name="Maeda R."/>
            <person name="Hayashi Y."/>
            <person name="Yamamoto H."/>
        </authorList>
    </citation>
    <scope>NUCLEOTIDE SEQUENCE [MRNA]</scope>
</reference>
<reference key="4">
    <citation type="journal article" date="1999" name="J. Vet. Med. Sci.">
        <title>Cloning of a full length cDNA encoding canine interleukin-4.</title>
        <authorList>
            <person name="Khatlani T.S."/>
            <person name="Ohno K."/>
            <person name="Ma Z."/>
            <person name="Inokuma H."/>
            <person name="Onishi T."/>
        </authorList>
    </citation>
    <scope>NUCLEOTIDE SEQUENCE [MRNA]</scope>
    <source>
        <strain>Beagle</strain>
    </source>
</reference>
<reference key="5">
    <citation type="journal article" date="2001" name="Cytokine">
        <title>Molecular cloning, expression and characterization of the Canis familiaris interleukin-4.</title>
        <authorList>
            <person name="Wondimu A."/>
            <person name="Veit M."/>
            <person name="Kohn B."/>
            <person name="Kaul S."/>
            <person name="Hoffmann A."/>
            <person name="Brunnberg L."/>
            <person name="Schmidt M.F."/>
        </authorList>
    </citation>
    <scope>NUCLEOTIDE SEQUENCE [MRNA]</scope>
</reference>
<reference key="6">
    <citation type="submission" date="2006-11" db="EMBL/GenBank/DDBJ databases">
        <title>Amplification and cloning of canine interleukin-4 in mammalian expression vector.</title>
        <authorList>
            <person name="Salunkhe S.S."/>
            <person name="Rai A."/>
            <person name="Saxena A."/>
            <person name="Tiwari A.K."/>
            <person name="Gupta P.K."/>
        </authorList>
    </citation>
    <scope>NUCLEOTIDE SEQUENCE [MRNA]</scope>
</reference>